<gene>
    <name type="primary">Pag1</name>
    <name type="synonym">Cbp</name>
    <name type="synonym">Pag</name>
</gene>
<protein>
    <recommendedName>
        <fullName>Phosphoprotein associated with glycosphingolipid-enriched microdomains 1</fullName>
    </recommendedName>
    <alternativeName>
        <fullName>Csk-binding protein</fullName>
    </alternativeName>
    <alternativeName>
        <fullName>Transmembrane phosphoprotein Cbp</fullName>
    </alternativeName>
</protein>
<accession>Q9JM80</accession>
<reference key="1">
    <citation type="journal article" date="2000" name="Nature">
        <title>Transmembrane phosphoprotein Cbp regulates the activities of Src-family tyrosine kinases.</title>
        <authorList>
            <person name="Kawabuchi M."/>
            <person name="Satomi Y."/>
            <person name="Takao T."/>
            <person name="Shimonishi Y."/>
            <person name="Nada S."/>
            <person name="Nagai K."/>
            <person name="Tarakhovsky A."/>
            <person name="Okada M."/>
        </authorList>
    </citation>
    <scope>NUCLEOTIDE SEQUENCE [MRNA]</scope>
    <scope>IDENTIFICATION BY MASS SPECTROMETRY</scope>
    <scope>INTERACTION WITH CSK</scope>
    <scope>SUBCELLULAR LOCATION</scope>
    <scope>TISSUE SPECIFICITY</scope>
    <scope>MUTAGENESIS OF TYR-107; TYR-165; TYR-183; TYR-224; TYR-296; TYR-314; TYR-351; TYR-381 AND TYR-409</scope>
    <scope>PHOSPHORYLATION AT TYR-314</scope>
    <scope>FUNCTION</scope>
    <source>
        <tissue>Brain</tissue>
    </source>
</reference>
<reference key="2">
    <citation type="journal article" date="2000" name="J. Biol. Chem.">
        <title>Transmembrane phosphoprotein Cbp positively regulates the activity of the carboxyl-terminal Src kinase, Csk.</title>
        <authorList>
            <person name="Takeuchi S."/>
            <person name="Takayama Y."/>
            <person name="Ogawa A."/>
            <person name="Tamura K."/>
            <person name="Okada M."/>
        </authorList>
    </citation>
    <scope>PHOSPHORYLATION AT TYR-165; TYR-183; TYR-224; TYR-314; TYR-381 AND TYR-409</scope>
    <scope>FUNCTION</scope>
</reference>
<reference key="3">
    <citation type="journal article" date="2002" name="J. Immunol.">
        <title>Transmembrane phosphoprotein Csk-binding protein/phosphoprotein associated with glycosphingolipid-enriched microdomains as a negative feedback regulator of mast cell signaling through the FcepsilonRI.</title>
        <authorList>
            <person name="Ohtake H."/>
            <person name="Ichikawa N."/>
            <person name="Okada M."/>
            <person name="Yamashita T."/>
        </authorList>
    </citation>
    <scope>SUBCELLULAR LOCATION</scope>
    <scope>TISSUE SPECIFICITY</scope>
    <scope>INTERACTION WITH CSK</scope>
    <scope>PHOSPHORYLATION</scope>
    <scope>FUNCTION</scope>
</reference>
<reference key="4">
    <citation type="journal article" date="2004" name="J. Biol. Chem.">
        <title>Mechanism of Csk-mediated down-regulation of Src family tyrosine kinases in epidermal growth factor signaling.</title>
        <authorList>
            <person name="Matsuoka H."/>
            <person name="Nada S."/>
            <person name="Okada M."/>
        </authorList>
    </citation>
    <scope>INTERACTION WITH CSK</scope>
    <scope>PHOSPHORYLATION</scope>
    <scope>MUTAGENESIS OF TYR-314</scope>
</reference>
<reference key="5">
    <citation type="journal article" date="2006" name="J. Biol. Chem.">
        <title>Csk-binding protein mediates sequential enzymatic down-regulation and degradation of Lyn in erythropoietin-stimulated cells.</title>
        <authorList>
            <person name="Ingley E."/>
            <person name="Schneider J.R."/>
            <person name="Payne C.J."/>
            <person name="McCarthy D.J."/>
            <person name="Harder K.W."/>
            <person name="Hibbs M.L."/>
            <person name="Klinken S.P."/>
        </authorList>
    </citation>
    <scope>INTERACTION WITH LYN AND CSK</scope>
    <scope>PHOSPHORYLATION AT TYR-107 AND TYR-314</scope>
</reference>
<reference key="6">
    <citation type="journal article" date="2012" name="Nat. Commun.">
        <title>Quantitative maps of protein phosphorylation sites across 14 different rat organs and tissues.</title>
        <authorList>
            <person name="Lundby A."/>
            <person name="Secher A."/>
            <person name="Lage K."/>
            <person name="Nordsborg N.B."/>
            <person name="Dmytriyev A."/>
            <person name="Lundby C."/>
            <person name="Olsen J.V."/>
        </authorList>
    </citation>
    <scope>PHOSPHORYLATION [LARGE SCALE ANALYSIS] AT SER-52; SER-63 AND SER-157</scope>
    <scope>IDENTIFICATION BY MASS SPECTROMETRY [LARGE SCALE ANALYSIS]</scope>
</reference>
<organism>
    <name type="scientific">Rattus norvegicus</name>
    <name type="common">Rat</name>
    <dbReference type="NCBI Taxonomy" id="10116"/>
    <lineage>
        <taxon>Eukaryota</taxon>
        <taxon>Metazoa</taxon>
        <taxon>Chordata</taxon>
        <taxon>Craniata</taxon>
        <taxon>Vertebrata</taxon>
        <taxon>Euteleostomi</taxon>
        <taxon>Mammalia</taxon>
        <taxon>Eutheria</taxon>
        <taxon>Euarchontoglires</taxon>
        <taxon>Glires</taxon>
        <taxon>Rodentia</taxon>
        <taxon>Myomorpha</taxon>
        <taxon>Muroidea</taxon>
        <taxon>Muridae</taxon>
        <taxon>Murinae</taxon>
        <taxon>Rattus</taxon>
    </lineage>
</organism>
<feature type="chain" id="PRO_0000083340" description="Phosphoprotein associated with glycosphingolipid-enriched microdomains 1">
    <location>
        <begin position="1"/>
        <end position="424"/>
    </location>
</feature>
<feature type="topological domain" description="Extracellular" evidence="4">
    <location>
        <begin position="1"/>
        <end position="17"/>
    </location>
</feature>
<feature type="transmembrane region" description="Helical; Signal-anchor for type III membrane protein" evidence="4">
    <location>
        <begin position="18"/>
        <end position="38"/>
    </location>
</feature>
<feature type="topological domain" description="Cytoplasmic" evidence="4">
    <location>
        <begin position="39"/>
        <end position="424"/>
    </location>
</feature>
<feature type="region of interest" description="Disordered" evidence="5">
    <location>
        <begin position="194"/>
        <end position="347"/>
    </location>
</feature>
<feature type="region of interest" description="Interaction with CSK">
    <location>
        <begin position="314"/>
        <end position="317"/>
    </location>
</feature>
<feature type="region of interest" description="Disordered" evidence="5">
    <location>
        <begin position="361"/>
        <end position="424"/>
    </location>
</feature>
<feature type="region of interest" description="Interaction with NHERF1" evidence="1">
    <location>
        <begin position="422"/>
        <end position="424"/>
    </location>
</feature>
<feature type="compositionally biased region" description="Basic and acidic residues" evidence="5">
    <location>
        <begin position="215"/>
        <end position="230"/>
    </location>
</feature>
<feature type="compositionally biased region" description="Polar residues" evidence="5">
    <location>
        <begin position="236"/>
        <end position="247"/>
    </location>
</feature>
<feature type="compositionally biased region" description="Polar residues" evidence="5">
    <location>
        <begin position="331"/>
        <end position="347"/>
    </location>
</feature>
<feature type="modified residue" description="Phosphoserine" evidence="12">
    <location>
        <position position="52"/>
    </location>
</feature>
<feature type="modified residue" description="Phosphoserine" evidence="12">
    <location>
        <position position="63"/>
    </location>
</feature>
<feature type="modified residue" description="Phosphotyrosine; by LYN" evidence="10">
    <location>
        <position position="107"/>
    </location>
</feature>
<feature type="modified residue" description="Phosphoserine" evidence="12">
    <location>
        <position position="157"/>
    </location>
</feature>
<feature type="modified residue" description="Phosphotyrosine" evidence="7">
    <location>
        <position position="165"/>
    </location>
</feature>
<feature type="modified residue" description="Phosphotyrosine" evidence="7">
    <location>
        <position position="183"/>
    </location>
</feature>
<feature type="modified residue" description="Phosphotyrosine" evidence="7">
    <location>
        <position position="224"/>
    </location>
</feature>
<feature type="modified residue" description="Phosphoserine" evidence="3">
    <location>
        <position position="226"/>
    </location>
</feature>
<feature type="modified residue" description="Phosphotyrosine; by FYN and LYN" evidence="6 7 10">
    <location>
        <position position="314"/>
    </location>
</feature>
<feature type="modified residue" description="Phosphoserine" evidence="2">
    <location>
        <position position="346"/>
    </location>
</feature>
<feature type="modified residue" description="Phosphotyrosine" evidence="3">
    <location>
        <position position="351"/>
    </location>
</feature>
<feature type="modified residue" description="Phosphotyrosine" evidence="7">
    <location>
        <position position="381"/>
    </location>
</feature>
<feature type="modified residue" description="Phosphotyrosine" evidence="7">
    <location>
        <position position="409"/>
    </location>
</feature>
<feature type="lipid moiety-binding region" description="S-palmitoyl cysteine" evidence="1">
    <location>
        <position position="39"/>
    </location>
</feature>
<feature type="lipid moiety-binding region" description="S-palmitoyl cysteine" evidence="1">
    <location>
        <position position="42"/>
    </location>
</feature>
<feature type="mutagenesis site" description="No effect on interaction with CSK." evidence="6">
    <original>Y</original>
    <variation>F</variation>
    <location>
        <position position="107"/>
    </location>
</feature>
<feature type="mutagenesis site" description="No effect on interaction with CSK." evidence="6">
    <original>Y</original>
    <variation>F</variation>
    <location>
        <position position="165"/>
    </location>
</feature>
<feature type="mutagenesis site" description="No effect on interaction with CSK." evidence="6">
    <original>Y</original>
    <variation>F</variation>
    <location>
        <position position="183"/>
    </location>
</feature>
<feature type="mutagenesis site" description="No effect on interaction with CSK." evidence="6">
    <original>Y</original>
    <variation>F</variation>
    <location>
        <position position="224"/>
    </location>
</feature>
<feature type="mutagenesis site" description="No effect on interaction with CSK." evidence="6">
    <original>Y</original>
    <variation>F</variation>
    <location>
        <position position="296"/>
    </location>
</feature>
<feature type="mutagenesis site" description="Abolishes interaction with CSK." evidence="6 9">
    <original>Y</original>
    <variation>F</variation>
    <location>
        <position position="314"/>
    </location>
</feature>
<feature type="mutagenesis site" description="No effect on interaction with CSK." evidence="6">
    <original>Y</original>
    <variation>F</variation>
    <location>
        <position position="351"/>
    </location>
</feature>
<feature type="mutagenesis site" description="No effect on interaction with CSK." evidence="6">
    <original>Y</original>
    <variation>F</variation>
    <location>
        <position position="381"/>
    </location>
</feature>
<feature type="mutagenesis site" description="No effect on interaction with CSK." evidence="6">
    <original>Y</original>
    <variation>F</variation>
    <location>
        <position position="409"/>
    </location>
</feature>
<feature type="turn" evidence="13">
    <location>
        <begin position="299"/>
        <end position="301"/>
    </location>
</feature>
<feature type="helix" evidence="13">
    <location>
        <begin position="307"/>
        <end position="312"/>
    </location>
</feature>
<comment type="function">
    <text evidence="6 7 8">Negatively regulates TCR (T-cell antigen receptor)-mediated signaling in T-cells and FCER1 (high affinity immunoglobulin epsilon receptor)-mediated signaling in mast cells. Promotes CSK activation and recruitment to lipid rafts, which results in LCK inhibition. Inhibits immunological synapse formation by preventing dynamic arrangement of lipid raft proteins. May be involved in cell adhesion signaling.</text>
</comment>
<comment type="subunit">
    <text evidence="1 6 8 9 10">Interacts with NHERF1/EBP50. In resting T-cells, part of a PAG1-NHERF1-MSN complex which is disrupted upon TCR activation (By similarity). When phosphorylated, interacts with CSK. Identified in a complex with LYN and STAT3 (By similarity). Interacts with LYN.</text>
</comment>
<comment type="subcellular location">
    <subcellularLocation>
        <location evidence="6 8">Cell membrane</location>
        <topology evidence="6 8">Single-pass type III membrane protein</topology>
    </subcellularLocation>
    <text>Present in lipid rafts.</text>
</comment>
<comment type="tissue specificity">
    <text evidence="6 8">Ubiquitously expressed, with highest levels in developing brain, lung, thymus, spleen and testis. Present in mast cells.</text>
</comment>
<comment type="PTM">
    <text evidence="1">Palmitoylated.</text>
</comment>
<comment type="PTM">
    <text evidence="6 7 8 9 10">Phosphorylated by FYN on Tyr-314 in resting T-cells; which promotes interaction with CSK. Dephosphorylated by PTPRC/CD45 upon TCR activation; which leads to CSK dissociation. May also be dephosphorylated by PTPN11. Hyperphosphorylated in mast cells upon FCER1 activation. Phosphorylated by LYN in response to EPO.</text>
</comment>
<comment type="caution">
    <text evidence="11">In contrast to the human ortholog, does not seem to interact with FYN.</text>
</comment>
<proteinExistence type="evidence at protein level"/>
<sequence length="424" mass="45915">MGPAGSALSSGQMQMQMVLWGSLAAVAMFFLITFLILLCSSCDRDKKPRQHSGDHESLMNVPSDKEMFSHSATSLTTDALASSEQNGVLTNGDILSEDSTMTCMQHYEEVQTSASDLLDSQDSTGKAKCHQSRELPRIPPENAVDAMLTARAADGDSGPGVEGPYEVLKDSSSQENMVEDCLYETVKEIKEVADKSQGGKSKSTSALKELQGAHAEGKADFAEYASVDRNKKCRHSTNAESILGTSSDLDEETPPPVPVKLLDENANLPEKGEHGAEEQAPEAPSGHSKRFSSLSYKSREEDPTLTEEEISAMYSSVNKPGQSAHKPGPESTCQCPQGPPQRSSSSCNDLYATVKDFEKTPNSISMLPPARRPGEEPEPDYEAIQTLNREDDKVPLGTNGHLVPKENDYESIGDLQQGRDVTRL</sequence>
<evidence type="ECO:0000250" key="1"/>
<evidence type="ECO:0000250" key="2">
    <source>
        <dbReference type="UniProtKB" id="Q3U1F9"/>
    </source>
</evidence>
<evidence type="ECO:0000250" key="3">
    <source>
        <dbReference type="UniProtKB" id="Q9NWQ8"/>
    </source>
</evidence>
<evidence type="ECO:0000255" key="4"/>
<evidence type="ECO:0000256" key="5">
    <source>
        <dbReference type="SAM" id="MobiDB-lite"/>
    </source>
</evidence>
<evidence type="ECO:0000269" key="6">
    <source>
    </source>
</evidence>
<evidence type="ECO:0000269" key="7">
    <source>
    </source>
</evidence>
<evidence type="ECO:0000269" key="8">
    <source>
    </source>
</evidence>
<evidence type="ECO:0000269" key="9">
    <source>
    </source>
</evidence>
<evidence type="ECO:0000269" key="10">
    <source>
    </source>
</evidence>
<evidence type="ECO:0000305" key="11">
    <source>
    </source>
</evidence>
<evidence type="ECO:0007744" key="12">
    <source>
    </source>
</evidence>
<evidence type="ECO:0007829" key="13">
    <source>
        <dbReference type="PDB" id="2RSY"/>
    </source>
</evidence>
<dbReference type="EMBL" id="AB038038">
    <property type="protein sequence ID" value="BAA95413.1"/>
    <property type="molecule type" value="mRNA"/>
</dbReference>
<dbReference type="RefSeq" id="NP_071589.1">
    <property type="nucleotide sequence ID" value="NM_022253.1"/>
</dbReference>
<dbReference type="RefSeq" id="XP_038958959.1">
    <property type="nucleotide sequence ID" value="XM_039103031.2"/>
</dbReference>
<dbReference type="RefSeq" id="XP_038958960.1">
    <property type="nucleotide sequence ID" value="XM_039103032.2"/>
</dbReference>
<dbReference type="PDB" id="2RSY">
    <property type="method" value="NMR"/>
    <property type="chains" value="B=288-321"/>
</dbReference>
<dbReference type="PDBsum" id="2RSY"/>
<dbReference type="BMRB" id="Q9JM80"/>
<dbReference type="SMR" id="Q9JM80"/>
<dbReference type="BioGRID" id="248938">
    <property type="interactions" value="2"/>
</dbReference>
<dbReference type="FunCoup" id="Q9JM80">
    <property type="interactions" value="872"/>
</dbReference>
<dbReference type="STRING" id="10116.ENSRNOP00000071506"/>
<dbReference type="iPTMnet" id="Q9JM80"/>
<dbReference type="PhosphoSitePlus" id="Q9JM80"/>
<dbReference type="PaxDb" id="10116-ENSRNOP00000065200"/>
<dbReference type="Ensembl" id="ENSRNOT00000119112.1">
    <property type="protein sequence ID" value="ENSRNOP00000079316.1"/>
    <property type="gene ID" value="ENSRNOG00000061328.2"/>
</dbReference>
<dbReference type="GeneID" id="64019"/>
<dbReference type="KEGG" id="rno:64019"/>
<dbReference type="AGR" id="RGD:620394"/>
<dbReference type="CTD" id="55824"/>
<dbReference type="RGD" id="620394">
    <property type="gene designation" value="Pag1"/>
</dbReference>
<dbReference type="eggNOG" id="ENOG502QUCZ">
    <property type="taxonomic scope" value="Eukaryota"/>
</dbReference>
<dbReference type="GeneTree" id="ENSGT00390000002061"/>
<dbReference type="InParanoid" id="Q9JM80"/>
<dbReference type="OMA" id="QCRDITR"/>
<dbReference type="OrthoDB" id="9874312at2759"/>
<dbReference type="PhylomeDB" id="Q9JM80"/>
<dbReference type="Reactome" id="R-RNO-180292">
    <property type="pathway name" value="GAB1 signalosome"/>
</dbReference>
<dbReference type="Reactome" id="R-RNO-202427">
    <property type="pathway name" value="Phosphorylation of CD3 and TCR zeta chains"/>
</dbReference>
<dbReference type="EvolutionaryTrace" id="Q9JM80"/>
<dbReference type="PRO" id="PR:Q9JM80"/>
<dbReference type="Proteomes" id="UP000002494">
    <property type="component" value="Chromosome 2"/>
</dbReference>
<dbReference type="GO" id="GO:0045121">
    <property type="term" value="C:membrane raft"/>
    <property type="evidence" value="ECO:0000266"/>
    <property type="project" value="RGD"/>
</dbReference>
<dbReference type="GO" id="GO:0005886">
    <property type="term" value="C:plasma membrane"/>
    <property type="evidence" value="ECO:0000266"/>
    <property type="project" value="RGD"/>
</dbReference>
<dbReference type="GO" id="GO:0042169">
    <property type="term" value="F:SH2 domain binding"/>
    <property type="evidence" value="ECO:0000266"/>
    <property type="project" value="RGD"/>
</dbReference>
<dbReference type="GO" id="GO:0005068">
    <property type="term" value="F:transmembrane receptor protein tyrosine kinase adaptor activity"/>
    <property type="evidence" value="ECO:0000304"/>
    <property type="project" value="RGD"/>
</dbReference>
<dbReference type="GO" id="GO:0002250">
    <property type="term" value="P:adaptive immune response"/>
    <property type="evidence" value="ECO:0007669"/>
    <property type="project" value="UniProtKB-KW"/>
</dbReference>
<dbReference type="GO" id="GO:0035556">
    <property type="term" value="P:intracellular signal transduction"/>
    <property type="evidence" value="ECO:0000266"/>
    <property type="project" value="RGD"/>
</dbReference>
<dbReference type="GO" id="GO:0050868">
    <property type="term" value="P:negative regulation of T cell activation"/>
    <property type="evidence" value="ECO:0000266"/>
    <property type="project" value="RGD"/>
</dbReference>
<dbReference type="GO" id="GO:0050863">
    <property type="term" value="P:regulation of T cell activation"/>
    <property type="evidence" value="ECO:0000266"/>
    <property type="project" value="RGD"/>
</dbReference>
<dbReference type="InterPro" id="IPR032748">
    <property type="entry name" value="PAG"/>
</dbReference>
<dbReference type="PANTHER" id="PTHR16322">
    <property type="entry name" value="PHOSPHOPROTEIN ASSOCIATED WITH GLYCOSPHINGOLIPID-ENRICHED MICRODOMAINS 1"/>
    <property type="match status" value="1"/>
</dbReference>
<dbReference type="PANTHER" id="PTHR16322:SF0">
    <property type="entry name" value="PHOSPHOPROTEIN ASSOCIATED WITH GLYCOSPHINGOLIPID-ENRICHED MICRODOMAINS 1"/>
    <property type="match status" value="1"/>
</dbReference>
<dbReference type="Pfam" id="PF15347">
    <property type="entry name" value="PAG"/>
    <property type="match status" value="1"/>
</dbReference>
<name>PHAG1_RAT</name>
<keyword id="KW-0002">3D-structure</keyword>
<keyword id="KW-1064">Adaptive immunity</keyword>
<keyword id="KW-1003">Cell membrane</keyword>
<keyword id="KW-0391">Immunity</keyword>
<keyword id="KW-0449">Lipoprotein</keyword>
<keyword id="KW-0472">Membrane</keyword>
<keyword id="KW-0564">Palmitate</keyword>
<keyword id="KW-0597">Phosphoprotein</keyword>
<keyword id="KW-1185">Reference proteome</keyword>
<keyword id="KW-0735">Signal-anchor</keyword>
<keyword id="KW-0812">Transmembrane</keyword>
<keyword id="KW-1133">Transmembrane helix</keyword>